<proteinExistence type="evidence at protein level"/>
<gene>
    <name type="primary">CRYAA</name>
</gene>
<organism>
    <name type="scientific">Canis lupus familiaris</name>
    <name type="common">Dog</name>
    <name type="synonym">Canis familiaris</name>
    <dbReference type="NCBI Taxonomy" id="9615"/>
    <lineage>
        <taxon>Eukaryota</taxon>
        <taxon>Metazoa</taxon>
        <taxon>Chordata</taxon>
        <taxon>Craniata</taxon>
        <taxon>Vertebrata</taxon>
        <taxon>Euteleostomi</taxon>
        <taxon>Mammalia</taxon>
        <taxon>Eutheria</taxon>
        <taxon>Laurasiatheria</taxon>
        <taxon>Carnivora</taxon>
        <taxon>Caniformia</taxon>
        <taxon>Canidae</taxon>
        <taxon>Canis</taxon>
    </lineage>
</organism>
<accession>P68280</accession>
<accession>A2IBH3</accession>
<accession>P02473</accession>
<evidence type="ECO:0000250" key="1"/>
<evidence type="ECO:0000250" key="2">
    <source>
        <dbReference type="UniProtKB" id="P02470"/>
    </source>
</evidence>
<evidence type="ECO:0000250" key="3">
    <source>
        <dbReference type="UniProtKB" id="P02474"/>
    </source>
</evidence>
<evidence type="ECO:0000250" key="4">
    <source>
        <dbReference type="UniProtKB" id="P02489"/>
    </source>
</evidence>
<evidence type="ECO:0000255" key="5">
    <source>
        <dbReference type="PROSITE-ProRule" id="PRU00285"/>
    </source>
</evidence>
<evidence type="ECO:0000256" key="6">
    <source>
        <dbReference type="SAM" id="MobiDB-lite"/>
    </source>
</evidence>
<evidence type="ECO:0000305" key="7"/>
<name>CRYAA_CANLF</name>
<protein>
    <recommendedName>
        <fullName>Alpha-crystallin A chain</fullName>
    </recommendedName>
</protein>
<sequence length="173" mass="19731">MDIAIQHPWFKRALGPFYPSRLFDQFFGEGLFEYDLLPFLSSTISPYYRQSLFRTVLDSGISEVRSDRDKFVIFLDVKHFSPEDLTVKVLEDFVEIHGKHNERQDDHGYISREFHRRYRLPSNVDQSALSCSLSADGMLTFSGPKVPSGVDAGHSERAIPVSREEKPSSAPSS</sequence>
<feature type="chain" id="PRO_0000125851" description="Alpha-crystallin A chain">
    <location>
        <begin position="1"/>
        <end position="173"/>
    </location>
</feature>
<feature type="domain" description="sHSP" evidence="5">
    <location>
        <begin position="52"/>
        <end position="162"/>
    </location>
</feature>
<feature type="region of interest" description="Required for complex formation with BFSP1 and BFSP2" evidence="4">
    <location>
        <begin position="1"/>
        <end position="63"/>
    </location>
</feature>
<feature type="region of interest" description="Disordered" evidence="6">
    <location>
        <begin position="144"/>
        <end position="173"/>
    </location>
</feature>
<feature type="compositionally biased region" description="Basic and acidic residues" evidence="6">
    <location>
        <begin position="153"/>
        <end position="167"/>
    </location>
</feature>
<feature type="binding site" evidence="2">
    <location>
        <position position="100"/>
    </location>
    <ligand>
        <name>Zn(2+)</name>
        <dbReference type="ChEBI" id="CHEBI:29105"/>
        <label>1</label>
    </ligand>
</feature>
<feature type="binding site" evidence="2">
    <location>
        <position position="102"/>
    </location>
    <ligand>
        <name>Zn(2+)</name>
        <dbReference type="ChEBI" id="CHEBI:29105"/>
        <label>1</label>
    </ligand>
</feature>
<feature type="binding site" evidence="2">
    <location>
        <position position="107"/>
    </location>
    <ligand>
        <name>Zn(2+)</name>
        <dbReference type="ChEBI" id="CHEBI:29105"/>
        <label>2</label>
    </ligand>
</feature>
<feature type="binding site" evidence="2">
    <location>
        <position position="154"/>
    </location>
    <ligand>
        <name>Zn(2+)</name>
        <dbReference type="ChEBI" id="CHEBI:29105"/>
        <label>3</label>
    </ligand>
</feature>
<feature type="modified residue" description="N-acetylmethionine" evidence="3 7">
    <location>
        <position position="1"/>
    </location>
</feature>
<feature type="modified residue" description="Deamidated glutamine; partial" evidence="1">
    <location>
        <position position="6"/>
    </location>
</feature>
<feature type="modified residue" description="Phosphoserine" evidence="4">
    <location>
        <position position="45"/>
    </location>
</feature>
<feature type="modified residue" description="Deamidated glutamine; partial" evidence="1">
    <location>
        <position position="50"/>
    </location>
</feature>
<feature type="modified residue" description="N6-acetyllysine" evidence="4">
    <location>
        <position position="70"/>
    </location>
</feature>
<feature type="modified residue" description="N6-acetyllysine" evidence="4">
    <location>
        <position position="99"/>
    </location>
</feature>
<feature type="modified residue" description="Deamidated asparagine; partial" evidence="1">
    <location>
        <position position="101"/>
    </location>
</feature>
<feature type="modified residue" description="Phosphoserine" evidence="2">
    <location>
        <position position="122"/>
    </location>
</feature>
<feature type="modified residue" description="Deamidated asparagine; partial" evidence="1">
    <location>
        <position position="123"/>
    </location>
</feature>
<feature type="glycosylation site" description="O-linked (GlcNAc) serine" evidence="1">
    <location>
        <position position="162"/>
    </location>
</feature>
<comment type="function">
    <text evidence="4">Contributes to the transparency and refractive index of the lens. Acts as a chaperone, preventing aggregation of various proteins under a wide range of stress conditions. Required for the correct formation of lens intermediate filaments as part of a complex composed of BFSP1, BFSP2 and CRYAA.</text>
</comment>
<comment type="subunit">
    <text evidence="2 4">Heteromer composed of three CRYAA and one CRYAB subunits. Inter-subunit bridging via zinc ions enhances stability, which is crucial as there is no protein turn over in the lens. Can also form homodimers and homotetramers (dimers of dimers) which serve as the building blocks of homooligomers (By similarity). Within homooligomers, the zinc-binding motif is created from residues of 3 different molecules. His-100 and Glu-102 from one molecule are ligands of the zinc ion, and His-107 and His-154 residues from additional molecules complete the site with tetrahedral coordination geometry (By similarity). Part of a complex required for lens intermediate filament formation composed of BFSP1, BFSP2 and CRYAA (By similarity).</text>
</comment>
<comment type="subcellular location">
    <subcellularLocation>
        <location evidence="4">Cytoplasm</location>
    </subcellularLocation>
    <subcellularLocation>
        <location evidence="4">Nucleus</location>
    </subcellularLocation>
    <text evidence="4">Translocates to the nucleus during heat shock and resides in sub-nuclear structures known as SC35 speckles or nuclear splicing speckles.</text>
</comment>
<comment type="PTM">
    <text evidence="4">Acetylation at Lys-70 may increase chaperone activity.</text>
</comment>
<comment type="PTM">
    <text evidence="4">Undergoes age-dependent proteolytical cleavage at the C-terminus.</text>
</comment>
<comment type="similarity">
    <text evidence="5">Belongs to the small heat shock protein (HSP20) family.</text>
</comment>
<reference key="1">
    <citation type="journal article" date="1975" name="Eur. J. Biochem.">
        <title>Primary structures of the alpha-crystallin A chains of seven mammalian species.</title>
        <authorList>
            <person name="de Jong W.W."/>
            <person name="van der Ouderaa F.J."/>
            <person name="Versteeg M."/>
            <person name="Groenewoud G."/>
            <person name="van Amelsvoort J.M."/>
            <person name="Bloemendal H."/>
        </authorList>
    </citation>
    <scope>PARTIAL PROTEIN SEQUENCE</scope>
</reference>
<reference key="2">
    <citation type="submission" date="2006-12" db="EMBL/GenBank/DDBJ databases">
        <authorList>
            <person name="Wistow G."/>
        </authorList>
    </citation>
    <scope>NUCLEOTIDE SEQUENCE [MRNA]</scope>
    <source>
        <tissue>Lens</tissue>
    </source>
</reference>
<keyword id="KW-0007">Acetylation</keyword>
<keyword id="KW-0143">Chaperone</keyword>
<keyword id="KW-0963">Cytoplasm</keyword>
<keyword id="KW-0903">Direct protein sequencing</keyword>
<keyword id="KW-0273">Eye lens protein</keyword>
<keyword id="KW-0325">Glycoprotein</keyword>
<keyword id="KW-0479">Metal-binding</keyword>
<keyword id="KW-0488">Methylation</keyword>
<keyword id="KW-0539">Nucleus</keyword>
<keyword id="KW-0597">Phosphoprotein</keyword>
<keyword id="KW-1185">Reference proteome</keyword>
<keyword id="KW-0862">Zinc</keyword>
<dbReference type="EMBL" id="EF187819">
    <property type="protein sequence ID" value="ABM74182.1"/>
    <property type="molecule type" value="mRNA"/>
</dbReference>
<dbReference type="PIR" id="A02875">
    <property type="entry name" value="CYDGAA"/>
</dbReference>
<dbReference type="RefSeq" id="NP_001074367.1">
    <property type="nucleotide sequence ID" value="NM_001080898.1"/>
</dbReference>
<dbReference type="SMR" id="P68280"/>
<dbReference type="FunCoup" id="P68280">
    <property type="interactions" value="94"/>
</dbReference>
<dbReference type="STRING" id="9615.ENSCAFP00000015568"/>
<dbReference type="GlyCosmos" id="P68280">
    <property type="glycosylation" value="1 site, No reported glycans"/>
</dbReference>
<dbReference type="PaxDb" id="9612-ENSCAFP00000015568"/>
<dbReference type="Ensembl" id="ENSCAFT00000016823.5">
    <property type="protein sequence ID" value="ENSCAFP00000015568.3"/>
    <property type="gene ID" value="ENSCAFG00000010584.5"/>
</dbReference>
<dbReference type="Ensembl" id="ENSCAFT00030035826.1">
    <property type="protein sequence ID" value="ENSCAFP00030031245.1"/>
    <property type="gene ID" value="ENSCAFG00030019517.1"/>
</dbReference>
<dbReference type="Ensembl" id="ENSCAFT00040046927.1">
    <property type="protein sequence ID" value="ENSCAFP00040040967.1"/>
    <property type="gene ID" value="ENSCAFG00040025170.1"/>
</dbReference>
<dbReference type="Ensembl" id="ENSCAFT00845031117.1">
    <property type="protein sequence ID" value="ENSCAFP00845024371.1"/>
    <property type="gene ID" value="ENSCAFG00845017570.1"/>
</dbReference>
<dbReference type="GeneID" id="487786"/>
<dbReference type="KEGG" id="cfa:487786"/>
<dbReference type="CTD" id="1409"/>
<dbReference type="VEuPathDB" id="HostDB:ENSCAFG00845017570"/>
<dbReference type="eggNOG" id="KOG3591">
    <property type="taxonomic scope" value="Eukaryota"/>
</dbReference>
<dbReference type="GeneTree" id="ENSGT00940000160159"/>
<dbReference type="HOGENOM" id="CLU_095001_2_0_1"/>
<dbReference type="InParanoid" id="P68280"/>
<dbReference type="OMA" id="QQDDHGY"/>
<dbReference type="OrthoDB" id="1431247at2759"/>
<dbReference type="TreeFam" id="TF105049"/>
<dbReference type="Proteomes" id="UP000002254">
    <property type="component" value="Chromosome 31"/>
</dbReference>
<dbReference type="Proteomes" id="UP000694429">
    <property type="component" value="Chromosome 31"/>
</dbReference>
<dbReference type="Proteomes" id="UP000694542">
    <property type="component" value="Chromosome 31"/>
</dbReference>
<dbReference type="Proteomes" id="UP000805418">
    <property type="component" value="Chromosome 31"/>
</dbReference>
<dbReference type="Bgee" id="ENSCAFG00000010584">
    <property type="expression patterns" value="Expressed in ovary and 8 other cell types or tissues"/>
</dbReference>
<dbReference type="GO" id="GO:0005737">
    <property type="term" value="C:cytoplasm"/>
    <property type="evidence" value="ECO:0000250"/>
    <property type="project" value="UniProtKB"/>
</dbReference>
<dbReference type="GO" id="GO:0005829">
    <property type="term" value="C:cytosol"/>
    <property type="evidence" value="ECO:0007669"/>
    <property type="project" value="Ensembl"/>
</dbReference>
<dbReference type="GO" id="GO:0005654">
    <property type="term" value="C:nucleoplasm"/>
    <property type="evidence" value="ECO:0007669"/>
    <property type="project" value="Ensembl"/>
</dbReference>
<dbReference type="GO" id="GO:0005634">
    <property type="term" value="C:nucleus"/>
    <property type="evidence" value="ECO:0000250"/>
    <property type="project" value="UniProtKB"/>
</dbReference>
<dbReference type="GO" id="GO:0032991">
    <property type="term" value="C:protein-containing complex"/>
    <property type="evidence" value="ECO:0007669"/>
    <property type="project" value="Ensembl"/>
</dbReference>
<dbReference type="GO" id="GO:0042802">
    <property type="term" value="F:identical protein binding"/>
    <property type="evidence" value="ECO:0007669"/>
    <property type="project" value="Ensembl"/>
</dbReference>
<dbReference type="GO" id="GO:0046872">
    <property type="term" value="F:metal ion binding"/>
    <property type="evidence" value="ECO:0007669"/>
    <property type="project" value="UniProtKB-KW"/>
</dbReference>
<dbReference type="GO" id="GO:0005212">
    <property type="term" value="F:structural constituent of eye lens"/>
    <property type="evidence" value="ECO:0007669"/>
    <property type="project" value="UniProtKB-KW"/>
</dbReference>
<dbReference type="GO" id="GO:0051082">
    <property type="term" value="F:unfolded protein binding"/>
    <property type="evidence" value="ECO:0000318"/>
    <property type="project" value="GO_Central"/>
</dbReference>
<dbReference type="GO" id="GO:0007015">
    <property type="term" value="P:actin filament organization"/>
    <property type="evidence" value="ECO:0007669"/>
    <property type="project" value="Ensembl"/>
</dbReference>
<dbReference type="GO" id="GO:0060561">
    <property type="term" value="P:apoptotic process involved in morphogenesis"/>
    <property type="evidence" value="ECO:0007669"/>
    <property type="project" value="Ensembl"/>
</dbReference>
<dbReference type="GO" id="GO:0048596">
    <property type="term" value="P:embryonic camera-type eye morphogenesis"/>
    <property type="evidence" value="ECO:0007669"/>
    <property type="project" value="Ensembl"/>
</dbReference>
<dbReference type="GO" id="GO:0002088">
    <property type="term" value="P:lens development in camera-type eye"/>
    <property type="evidence" value="ECO:0000318"/>
    <property type="project" value="GO_Central"/>
</dbReference>
<dbReference type="GO" id="GO:0070309">
    <property type="term" value="P:lens fiber cell morphogenesis"/>
    <property type="evidence" value="ECO:0007669"/>
    <property type="project" value="Ensembl"/>
</dbReference>
<dbReference type="GO" id="GO:0007017">
    <property type="term" value="P:microtubule-based process"/>
    <property type="evidence" value="ECO:0007669"/>
    <property type="project" value="Ensembl"/>
</dbReference>
<dbReference type="GO" id="GO:0007005">
    <property type="term" value="P:mitochondrion organization"/>
    <property type="evidence" value="ECO:0007669"/>
    <property type="project" value="Ensembl"/>
</dbReference>
<dbReference type="GO" id="GO:0043066">
    <property type="term" value="P:negative regulation of apoptotic process"/>
    <property type="evidence" value="ECO:0000318"/>
    <property type="project" value="GO_Central"/>
</dbReference>
<dbReference type="GO" id="GO:0010629">
    <property type="term" value="P:negative regulation of gene expression"/>
    <property type="evidence" value="ECO:0007669"/>
    <property type="project" value="Ensembl"/>
</dbReference>
<dbReference type="GO" id="GO:0032387">
    <property type="term" value="P:negative regulation of intracellular transport"/>
    <property type="evidence" value="ECO:0007669"/>
    <property type="project" value="Ensembl"/>
</dbReference>
<dbReference type="GO" id="GO:0030307">
    <property type="term" value="P:positive regulation of cell growth"/>
    <property type="evidence" value="ECO:0007669"/>
    <property type="project" value="Ensembl"/>
</dbReference>
<dbReference type="GO" id="GO:0042026">
    <property type="term" value="P:protein refolding"/>
    <property type="evidence" value="ECO:0000318"/>
    <property type="project" value="GO_Central"/>
</dbReference>
<dbReference type="GO" id="GO:0050821">
    <property type="term" value="P:protein stabilization"/>
    <property type="evidence" value="ECO:0007669"/>
    <property type="project" value="Ensembl"/>
</dbReference>
<dbReference type="GO" id="GO:0009408">
    <property type="term" value="P:response to heat"/>
    <property type="evidence" value="ECO:0000318"/>
    <property type="project" value="GO_Central"/>
</dbReference>
<dbReference type="GO" id="GO:0042542">
    <property type="term" value="P:response to hydrogen peroxide"/>
    <property type="evidence" value="ECO:0007669"/>
    <property type="project" value="Ensembl"/>
</dbReference>
<dbReference type="GO" id="GO:0001666">
    <property type="term" value="P:response to hypoxia"/>
    <property type="evidence" value="ECO:0007669"/>
    <property type="project" value="Ensembl"/>
</dbReference>
<dbReference type="GO" id="GO:0070141">
    <property type="term" value="P:response to UV-A"/>
    <property type="evidence" value="ECO:0007669"/>
    <property type="project" value="Ensembl"/>
</dbReference>
<dbReference type="GO" id="GO:0007021">
    <property type="term" value="P:tubulin complex assembly"/>
    <property type="evidence" value="ECO:0007669"/>
    <property type="project" value="Ensembl"/>
</dbReference>
<dbReference type="GO" id="GO:0007601">
    <property type="term" value="P:visual perception"/>
    <property type="evidence" value="ECO:0007669"/>
    <property type="project" value="Ensembl"/>
</dbReference>
<dbReference type="CDD" id="cd06497">
    <property type="entry name" value="ACD_alphaA-crystallin_HspB4"/>
    <property type="match status" value="1"/>
</dbReference>
<dbReference type="FunFam" id="2.60.40.790:FF:000008">
    <property type="entry name" value="Alpha-crystallin A chain"/>
    <property type="match status" value="1"/>
</dbReference>
<dbReference type="Gene3D" id="2.60.40.790">
    <property type="match status" value="1"/>
</dbReference>
<dbReference type="InterPro" id="IPR002068">
    <property type="entry name" value="A-crystallin/Hsp20_dom"/>
</dbReference>
<dbReference type="InterPro" id="IPR055269">
    <property type="entry name" value="Alpha-crystallin/HSP_16"/>
</dbReference>
<dbReference type="InterPro" id="IPR001436">
    <property type="entry name" value="Alpha-crystallin/sHSP_animal"/>
</dbReference>
<dbReference type="InterPro" id="IPR003090">
    <property type="entry name" value="Alpha-crystallin_N"/>
</dbReference>
<dbReference type="InterPro" id="IPR008978">
    <property type="entry name" value="HSP20-like_chaperone"/>
</dbReference>
<dbReference type="PANTHER" id="PTHR45640:SF14">
    <property type="entry name" value="ALPHA-CRYSTALLIN A CHAIN"/>
    <property type="match status" value="1"/>
</dbReference>
<dbReference type="PANTHER" id="PTHR45640">
    <property type="entry name" value="HEAT SHOCK PROTEIN HSP-12.2-RELATED"/>
    <property type="match status" value="1"/>
</dbReference>
<dbReference type="Pfam" id="PF00525">
    <property type="entry name" value="Crystallin"/>
    <property type="match status" value="1"/>
</dbReference>
<dbReference type="Pfam" id="PF00011">
    <property type="entry name" value="HSP20"/>
    <property type="match status" value="1"/>
</dbReference>
<dbReference type="PIRSF" id="PIRSF036514">
    <property type="entry name" value="Sm_HSP_B1"/>
    <property type="match status" value="1"/>
</dbReference>
<dbReference type="PRINTS" id="PR00299">
    <property type="entry name" value="ACRYSTALLIN"/>
</dbReference>
<dbReference type="SUPFAM" id="SSF49764">
    <property type="entry name" value="HSP20-like chaperones"/>
    <property type="match status" value="1"/>
</dbReference>
<dbReference type="PROSITE" id="PS01031">
    <property type="entry name" value="SHSP"/>
    <property type="match status" value="1"/>
</dbReference>